<sequence length="153" mass="17111">MSESVDSVELFTDGACKGNPGPGGWGALLVCKGVEKELWGGEANTTNNRMELLGAIRGLEALKRPCEVLLVTDSQYVMKGINEWMANWKKRGWKTAAKEPVKNADLWKALDEQVNRHKVTWKWVRGHIGHHGNERADQLANRGVDEVRGYKQS</sequence>
<accession>Q3KE77</accession>
<dbReference type="EC" id="3.1.26.4" evidence="1"/>
<dbReference type="EMBL" id="CP000094">
    <property type="protein sequence ID" value="ABA73929.1"/>
    <property type="molecule type" value="Genomic_DNA"/>
</dbReference>
<dbReference type="RefSeq" id="WP_011333615.1">
    <property type="nucleotide sequence ID" value="NC_007492.2"/>
</dbReference>
<dbReference type="SMR" id="Q3KE77"/>
<dbReference type="KEGG" id="pfo:Pfl01_2186"/>
<dbReference type="eggNOG" id="COG0328">
    <property type="taxonomic scope" value="Bacteria"/>
</dbReference>
<dbReference type="HOGENOM" id="CLU_030894_6_0_6"/>
<dbReference type="Proteomes" id="UP000002704">
    <property type="component" value="Chromosome"/>
</dbReference>
<dbReference type="GO" id="GO:0005737">
    <property type="term" value="C:cytoplasm"/>
    <property type="evidence" value="ECO:0007669"/>
    <property type="project" value="UniProtKB-SubCell"/>
</dbReference>
<dbReference type="GO" id="GO:0000287">
    <property type="term" value="F:magnesium ion binding"/>
    <property type="evidence" value="ECO:0007669"/>
    <property type="project" value="UniProtKB-UniRule"/>
</dbReference>
<dbReference type="GO" id="GO:0003676">
    <property type="term" value="F:nucleic acid binding"/>
    <property type="evidence" value="ECO:0007669"/>
    <property type="project" value="InterPro"/>
</dbReference>
<dbReference type="GO" id="GO:0004523">
    <property type="term" value="F:RNA-DNA hybrid ribonuclease activity"/>
    <property type="evidence" value="ECO:0007669"/>
    <property type="project" value="UniProtKB-UniRule"/>
</dbReference>
<dbReference type="GO" id="GO:0043137">
    <property type="term" value="P:DNA replication, removal of RNA primer"/>
    <property type="evidence" value="ECO:0007669"/>
    <property type="project" value="TreeGrafter"/>
</dbReference>
<dbReference type="CDD" id="cd09278">
    <property type="entry name" value="RNase_HI_prokaryote_like"/>
    <property type="match status" value="1"/>
</dbReference>
<dbReference type="FunFam" id="3.30.420.10:FF:000089">
    <property type="entry name" value="Ribonuclease H"/>
    <property type="match status" value="1"/>
</dbReference>
<dbReference type="Gene3D" id="3.30.420.10">
    <property type="entry name" value="Ribonuclease H-like superfamily/Ribonuclease H"/>
    <property type="match status" value="1"/>
</dbReference>
<dbReference type="HAMAP" id="MF_00042">
    <property type="entry name" value="RNase_H"/>
    <property type="match status" value="1"/>
</dbReference>
<dbReference type="InterPro" id="IPR050092">
    <property type="entry name" value="RNase_H"/>
</dbReference>
<dbReference type="InterPro" id="IPR012337">
    <property type="entry name" value="RNaseH-like_sf"/>
</dbReference>
<dbReference type="InterPro" id="IPR002156">
    <property type="entry name" value="RNaseH_domain"/>
</dbReference>
<dbReference type="InterPro" id="IPR036397">
    <property type="entry name" value="RNaseH_sf"/>
</dbReference>
<dbReference type="InterPro" id="IPR022892">
    <property type="entry name" value="RNaseHI"/>
</dbReference>
<dbReference type="NCBIfam" id="NF001236">
    <property type="entry name" value="PRK00203.1"/>
    <property type="match status" value="1"/>
</dbReference>
<dbReference type="PANTHER" id="PTHR10642">
    <property type="entry name" value="RIBONUCLEASE H1"/>
    <property type="match status" value="1"/>
</dbReference>
<dbReference type="PANTHER" id="PTHR10642:SF26">
    <property type="entry name" value="RIBONUCLEASE H1"/>
    <property type="match status" value="1"/>
</dbReference>
<dbReference type="Pfam" id="PF00075">
    <property type="entry name" value="RNase_H"/>
    <property type="match status" value="1"/>
</dbReference>
<dbReference type="SUPFAM" id="SSF53098">
    <property type="entry name" value="Ribonuclease H-like"/>
    <property type="match status" value="1"/>
</dbReference>
<dbReference type="PROSITE" id="PS50879">
    <property type="entry name" value="RNASE_H_1"/>
    <property type="match status" value="1"/>
</dbReference>
<keyword id="KW-0963">Cytoplasm</keyword>
<keyword id="KW-0255">Endonuclease</keyword>
<keyword id="KW-0378">Hydrolase</keyword>
<keyword id="KW-0460">Magnesium</keyword>
<keyword id="KW-0479">Metal-binding</keyword>
<keyword id="KW-0540">Nuclease</keyword>
<feature type="chain" id="PRO_0000332655" description="Ribonuclease H">
    <location>
        <begin position="1"/>
        <end position="153"/>
    </location>
</feature>
<feature type="domain" description="RNase H type-1" evidence="2">
    <location>
        <begin position="4"/>
        <end position="145"/>
    </location>
</feature>
<feature type="binding site" evidence="1">
    <location>
        <position position="13"/>
    </location>
    <ligand>
        <name>Mg(2+)</name>
        <dbReference type="ChEBI" id="CHEBI:18420"/>
        <label>1</label>
    </ligand>
</feature>
<feature type="binding site" evidence="1">
    <location>
        <position position="13"/>
    </location>
    <ligand>
        <name>Mg(2+)</name>
        <dbReference type="ChEBI" id="CHEBI:18420"/>
        <label>2</label>
    </ligand>
</feature>
<feature type="binding site" evidence="1">
    <location>
        <position position="51"/>
    </location>
    <ligand>
        <name>Mg(2+)</name>
        <dbReference type="ChEBI" id="CHEBI:18420"/>
        <label>1</label>
    </ligand>
</feature>
<feature type="binding site" evidence="1">
    <location>
        <position position="73"/>
    </location>
    <ligand>
        <name>Mg(2+)</name>
        <dbReference type="ChEBI" id="CHEBI:18420"/>
        <label>1</label>
    </ligand>
</feature>
<feature type="binding site" evidence="1">
    <location>
        <position position="137"/>
    </location>
    <ligand>
        <name>Mg(2+)</name>
        <dbReference type="ChEBI" id="CHEBI:18420"/>
        <label>2</label>
    </ligand>
</feature>
<proteinExistence type="inferred from homology"/>
<gene>
    <name evidence="1" type="primary">rnhA</name>
    <name type="ordered locus">Pfl01_2186</name>
</gene>
<name>RNH_PSEPF</name>
<reference key="1">
    <citation type="journal article" date="2009" name="Genome Biol.">
        <title>Genomic and genetic analyses of diversity and plant interactions of Pseudomonas fluorescens.</title>
        <authorList>
            <person name="Silby M.W."/>
            <person name="Cerdeno-Tarraga A.M."/>
            <person name="Vernikos G.S."/>
            <person name="Giddens S.R."/>
            <person name="Jackson R.W."/>
            <person name="Preston G.M."/>
            <person name="Zhang X.-X."/>
            <person name="Moon C.D."/>
            <person name="Gehrig S.M."/>
            <person name="Godfrey S.A.C."/>
            <person name="Knight C.G."/>
            <person name="Malone J.G."/>
            <person name="Robinson Z."/>
            <person name="Spiers A.J."/>
            <person name="Harris S."/>
            <person name="Challis G.L."/>
            <person name="Yaxley A.M."/>
            <person name="Harris D."/>
            <person name="Seeger K."/>
            <person name="Murphy L."/>
            <person name="Rutter S."/>
            <person name="Squares R."/>
            <person name="Quail M.A."/>
            <person name="Saunders E."/>
            <person name="Mavromatis K."/>
            <person name="Brettin T.S."/>
            <person name="Bentley S.D."/>
            <person name="Hothersall J."/>
            <person name="Stephens E."/>
            <person name="Thomas C.M."/>
            <person name="Parkhill J."/>
            <person name="Levy S.B."/>
            <person name="Rainey P.B."/>
            <person name="Thomson N.R."/>
        </authorList>
    </citation>
    <scope>NUCLEOTIDE SEQUENCE [LARGE SCALE GENOMIC DNA]</scope>
    <source>
        <strain>Pf0-1</strain>
    </source>
</reference>
<comment type="function">
    <text evidence="1">Endonuclease that specifically degrades the RNA of RNA-DNA hybrids.</text>
</comment>
<comment type="catalytic activity">
    <reaction evidence="1">
        <text>Endonucleolytic cleavage to 5'-phosphomonoester.</text>
        <dbReference type="EC" id="3.1.26.4"/>
    </reaction>
</comment>
<comment type="cofactor">
    <cofactor evidence="1">
        <name>Mg(2+)</name>
        <dbReference type="ChEBI" id="CHEBI:18420"/>
    </cofactor>
    <text evidence="1">Binds 1 Mg(2+) ion per subunit. May bind a second metal ion at a regulatory site, or after substrate binding.</text>
</comment>
<comment type="subunit">
    <text evidence="1">Monomer.</text>
</comment>
<comment type="subcellular location">
    <subcellularLocation>
        <location evidence="1">Cytoplasm</location>
    </subcellularLocation>
</comment>
<comment type="similarity">
    <text evidence="1">Belongs to the RNase H family.</text>
</comment>
<evidence type="ECO:0000255" key="1">
    <source>
        <dbReference type="HAMAP-Rule" id="MF_00042"/>
    </source>
</evidence>
<evidence type="ECO:0000255" key="2">
    <source>
        <dbReference type="PROSITE-ProRule" id="PRU00408"/>
    </source>
</evidence>
<organism>
    <name type="scientific">Pseudomonas fluorescens (strain Pf0-1)</name>
    <dbReference type="NCBI Taxonomy" id="205922"/>
    <lineage>
        <taxon>Bacteria</taxon>
        <taxon>Pseudomonadati</taxon>
        <taxon>Pseudomonadota</taxon>
        <taxon>Gammaproteobacteria</taxon>
        <taxon>Pseudomonadales</taxon>
        <taxon>Pseudomonadaceae</taxon>
        <taxon>Pseudomonas</taxon>
    </lineage>
</organism>
<protein>
    <recommendedName>
        <fullName evidence="1">Ribonuclease H</fullName>
        <shortName evidence="1">RNase H</shortName>
        <ecNumber evidence="1">3.1.26.4</ecNumber>
    </recommendedName>
</protein>